<evidence type="ECO:0000255" key="1">
    <source>
        <dbReference type="HAMAP-Rule" id="MF_01326"/>
    </source>
</evidence>
<evidence type="ECO:0000305" key="2"/>
<comment type="function">
    <text evidence="1">One of two assembly initiator proteins, it binds directly to the 5'-end of the 23S rRNA, where it nucleates assembly of the 50S subunit.</text>
</comment>
<comment type="function">
    <text evidence="1">One of the proteins that surrounds the polypeptide exit tunnel on the outside of the subunit.</text>
</comment>
<comment type="subunit">
    <text evidence="1">Part of the 50S ribosomal subunit.</text>
</comment>
<comment type="similarity">
    <text evidence="1">Belongs to the universal ribosomal protein uL24 family.</text>
</comment>
<gene>
    <name evidence="1" type="primary">rplX</name>
    <name type="ordered locus">YPA_3252</name>
</gene>
<sequence length="104" mass="11347">MAAKIRRDDEVIVLTGKDKGKRGKVKNVLSSGKVIVEGINLVKKHQKPVPALNQPGGIVEKEAAIQVSNLALFNATTGKADRVGFRFEDGKKVRFFKSTSETIK</sequence>
<accession>Q1C2V8</accession>
<name>RL24_YERPA</name>
<protein>
    <recommendedName>
        <fullName evidence="1">Large ribosomal subunit protein uL24</fullName>
    </recommendedName>
    <alternativeName>
        <fullName evidence="2">50S ribosomal protein L24</fullName>
    </alternativeName>
</protein>
<dbReference type="EMBL" id="CP000308">
    <property type="protein sequence ID" value="ABG15214.1"/>
    <property type="molecule type" value="Genomic_DNA"/>
</dbReference>
<dbReference type="RefSeq" id="WP_002213327.1">
    <property type="nucleotide sequence ID" value="NZ_CP009906.1"/>
</dbReference>
<dbReference type="SMR" id="Q1C2V8"/>
<dbReference type="GeneID" id="57974384"/>
<dbReference type="KEGG" id="ypa:YPA_3252"/>
<dbReference type="Proteomes" id="UP000001971">
    <property type="component" value="Chromosome"/>
</dbReference>
<dbReference type="GO" id="GO:1990904">
    <property type="term" value="C:ribonucleoprotein complex"/>
    <property type="evidence" value="ECO:0007669"/>
    <property type="project" value="UniProtKB-KW"/>
</dbReference>
<dbReference type="GO" id="GO:0005840">
    <property type="term" value="C:ribosome"/>
    <property type="evidence" value="ECO:0007669"/>
    <property type="project" value="UniProtKB-KW"/>
</dbReference>
<dbReference type="GO" id="GO:0019843">
    <property type="term" value="F:rRNA binding"/>
    <property type="evidence" value="ECO:0007669"/>
    <property type="project" value="UniProtKB-UniRule"/>
</dbReference>
<dbReference type="GO" id="GO:0003735">
    <property type="term" value="F:structural constituent of ribosome"/>
    <property type="evidence" value="ECO:0007669"/>
    <property type="project" value="InterPro"/>
</dbReference>
<dbReference type="GO" id="GO:0006412">
    <property type="term" value="P:translation"/>
    <property type="evidence" value="ECO:0007669"/>
    <property type="project" value="UniProtKB-UniRule"/>
</dbReference>
<dbReference type="CDD" id="cd06089">
    <property type="entry name" value="KOW_RPL26"/>
    <property type="match status" value="1"/>
</dbReference>
<dbReference type="FunFam" id="2.30.30.30:FF:000004">
    <property type="entry name" value="50S ribosomal protein L24"/>
    <property type="match status" value="1"/>
</dbReference>
<dbReference type="Gene3D" id="2.30.30.30">
    <property type="match status" value="1"/>
</dbReference>
<dbReference type="HAMAP" id="MF_01326_B">
    <property type="entry name" value="Ribosomal_uL24_B"/>
    <property type="match status" value="1"/>
</dbReference>
<dbReference type="InterPro" id="IPR005824">
    <property type="entry name" value="KOW"/>
</dbReference>
<dbReference type="InterPro" id="IPR014722">
    <property type="entry name" value="Rib_uL2_dom2"/>
</dbReference>
<dbReference type="InterPro" id="IPR003256">
    <property type="entry name" value="Ribosomal_uL24"/>
</dbReference>
<dbReference type="InterPro" id="IPR005825">
    <property type="entry name" value="Ribosomal_uL24_CS"/>
</dbReference>
<dbReference type="InterPro" id="IPR041988">
    <property type="entry name" value="Ribosomal_uL24_KOW"/>
</dbReference>
<dbReference type="InterPro" id="IPR008991">
    <property type="entry name" value="Translation_prot_SH3-like_sf"/>
</dbReference>
<dbReference type="NCBIfam" id="TIGR01079">
    <property type="entry name" value="rplX_bact"/>
    <property type="match status" value="1"/>
</dbReference>
<dbReference type="PANTHER" id="PTHR12903">
    <property type="entry name" value="MITOCHONDRIAL RIBOSOMAL PROTEIN L24"/>
    <property type="match status" value="1"/>
</dbReference>
<dbReference type="Pfam" id="PF00467">
    <property type="entry name" value="KOW"/>
    <property type="match status" value="1"/>
</dbReference>
<dbReference type="Pfam" id="PF17136">
    <property type="entry name" value="ribosomal_L24"/>
    <property type="match status" value="1"/>
</dbReference>
<dbReference type="SMART" id="SM00739">
    <property type="entry name" value="KOW"/>
    <property type="match status" value="1"/>
</dbReference>
<dbReference type="SUPFAM" id="SSF50104">
    <property type="entry name" value="Translation proteins SH3-like domain"/>
    <property type="match status" value="1"/>
</dbReference>
<dbReference type="PROSITE" id="PS01108">
    <property type="entry name" value="RIBOSOMAL_L24"/>
    <property type="match status" value="1"/>
</dbReference>
<organism>
    <name type="scientific">Yersinia pestis bv. Antiqua (strain Antiqua)</name>
    <dbReference type="NCBI Taxonomy" id="360102"/>
    <lineage>
        <taxon>Bacteria</taxon>
        <taxon>Pseudomonadati</taxon>
        <taxon>Pseudomonadota</taxon>
        <taxon>Gammaproteobacteria</taxon>
        <taxon>Enterobacterales</taxon>
        <taxon>Yersiniaceae</taxon>
        <taxon>Yersinia</taxon>
    </lineage>
</organism>
<reference key="1">
    <citation type="journal article" date="2006" name="J. Bacteriol.">
        <title>Complete genome sequence of Yersinia pestis strains Antiqua and Nepal516: evidence of gene reduction in an emerging pathogen.</title>
        <authorList>
            <person name="Chain P.S.G."/>
            <person name="Hu P."/>
            <person name="Malfatti S.A."/>
            <person name="Radnedge L."/>
            <person name="Larimer F."/>
            <person name="Vergez L.M."/>
            <person name="Worsham P."/>
            <person name="Chu M.C."/>
            <person name="Andersen G.L."/>
        </authorList>
    </citation>
    <scope>NUCLEOTIDE SEQUENCE [LARGE SCALE GENOMIC DNA]</scope>
    <source>
        <strain>Antiqua</strain>
    </source>
</reference>
<feature type="chain" id="PRO_1000052337" description="Large ribosomal subunit protein uL24">
    <location>
        <begin position="1"/>
        <end position="104"/>
    </location>
</feature>
<keyword id="KW-0687">Ribonucleoprotein</keyword>
<keyword id="KW-0689">Ribosomal protein</keyword>
<keyword id="KW-0694">RNA-binding</keyword>
<keyword id="KW-0699">rRNA-binding</keyword>
<proteinExistence type="inferred from homology"/>